<organism>
    <name type="scientific">Staphylococcus epidermidis (strain ATCC 12228 / FDA PCI 1200)</name>
    <dbReference type="NCBI Taxonomy" id="176280"/>
    <lineage>
        <taxon>Bacteria</taxon>
        <taxon>Bacillati</taxon>
        <taxon>Bacillota</taxon>
        <taxon>Bacilli</taxon>
        <taxon>Bacillales</taxon>
        <taxon>Staphylococcaceae</taxon>
        <taxon>Staphylococcus</taxon>
    </lineage>
</organism>
<sequence>MSDVSLKLSAKDIYEKDFEKTMARGYRREEVDAFLDDIITDYQKMADMNNEVVKLSEENHKLKKELEELRLRVATSRPQDNKNFSSNNSSSASNNVDILKRISNLEKAVFGK</sequence>
<proteinExistence type="inferred from homology"/>
<gene>
    <name evidence="1" type="primary">gpsB</name>
    <name type="ordered locus">SE_1134</name>
</gene>
<accession>Q8CSJ3</accession>
<feature type="chain" id="PRO_0000337945" description="Cell cycle protein GpsB">
    <location>
        <begin position="1"/>
        <end position="112"/>
    </location>
</feature>
<feature type="region of interest" description="Disordered" evidence="2">
    <location>
        <begin position="74"/>
        <end position="96"/>
    </location>
</feature>
<feature type="coiled-coil region" evidence="1">
    <location>
        <begin position="42"/>
        <end position="77"/>
    </location>
</feature>
<feature type="compositionally biased region" description="Low complexity" evidence="2">
    <location>
        <begin position="81"/>
        <end position="95"/>
    </location>
</feature>
<comment type="function">
    <text evidence="1">Divisome component that associates with the complex late in its assembly, after the Z-ring is formed, and is dependent on DivIC and PBP2B for its recruitment to the divisome. Together with EzrA, is a key component of the system that regulates PBP1 localization during cell cycle progression. Its main role could be the removal of PBP1 from the cell pole after pole maturation is completed. Also contributes to the recruitment of PBP1 to the division complex. Not essential for septum formation.</text>
</comment>
<comment type="subunit">
    <text evidence="1">Forms polymers through the coiled coil domains. Interacts with PBP1, MreC and EzrA.</text>
</comment>
<comment type="subcellular location">
    <subcellularLocation>
        <location evidence="1">Cytoplasm</location>
    </subcellularLocation>
    <text evidence="1">Shuttles between the lateral wall and the division site in a cell cycle-dependent manner.</text>
</comment>
<comment type="similarity">
    <text evidence="1">Belongs to the GpsB family.</text>
</comment>
<dbReference type="EMBL" id="AE015929">
    <property type="protein sequence ID" value="AAO04731.1"/>
    <property type="molecule type" value="Genomic_DNA"/>
</dbReference>
<dbReference type="RefSeq" id="NP_764689.1">
    <property type="nucleotide sequence ID" value="NC_004461.1"/>
</dbReference>
<dbReference type="RefSeq" id="WP_001831034.1">
    <property type="nucleotide sequence ID" value="NZ_WBME01000088.1"/>
</dbReference>
<dbReference type="SMR" id="Q8CSJ3"/>
<dbReference type="GeneID" id="50018743"/>
<dbReference type="KEGG" id="sep:SE_1134"/>
<dbReference type="PATRIC" id="fig|176280.10.peg.1107"/>
<dbReference type="eggNOG" id="COG3599">
    <property type="taxonomic scope" value="Bacteria"/>
</dbReference>
<dbReference type="HOGENOM" id="CLU_140309_1_0_9"/>
<dbReference type="OrthoDB" id="389699at2"/>
<dbReference type="Proteomes" id="UP000001411">
    <property type="component" value="Chromosome"/>
</dbReference>
<dbReference type="GO" id="GO:0005737">
    <property type="term" value="C:cytoplasm"/>
    <property type="evidence" value="ECO:0007669"/>
    <property type="project" value="UniProtKB-SubCell"/>
</dbReference>
<dbReference type="GO" id="GO:0051301">
    <property type="term" value="P:cell division"/>
    <property type="evidence" value="ECO:0007669"/>
    <property type="project" value="UniProtKB-UniRule"/>
</dbReference>
<dbReference type="GO" id="GO:0008360">
    <property type="term" value="P:regulation of cell shape"/>
    <property type="evidence" value="ECO:0007669"/>
    <property type="project" value="UniProtKB-UniRule"/>
</dbReference>
<dbReference type="Gene3D" id="6.10.250.660">
    <property type="match status" value="1"/>
</dbReference>
<dbReference type="HAMAP" id="MF_02011">
    <property type="entry name" value="GpsB"/>
    <property type="match status" value="1"/>
</dbReference>
<dbReference type="InterPro" id="IPR011229">
    <property type="entry name" value="Cell_cycle_GpsB"/>
</dbReference>
<dbReference type="InterPro" id="IPR019933">
    <property type="entry name" value="DivIVA_domain"/>
</dbReference>
<dbReference type="InterPro" id="IPR007793">
    <property type="entry name" value="DivIVA_fam"/>
</dbReference>
<dbReference type="NCBIfam" id="TIGR03544">
    <property type="entry name" value="DivI1A_domain"/>
    <property type="match status" value="1"/>
</dbReference>
<dbReference type="NCBIfam" id="NF010725">
    <property type="entry name" value="PRK14127.1"/>
    <property type="match status" value="1"/>
</dbReference>
<dbReference type="PANTHER" id="PTHR35794:SF1">
    <property type="entry name" value="CELL CYCLE PROTEIN GPSB"/>
    <property type="match status" value="1"/>
</dbReference>
<dbReference type="PANTHER" id="PTHR35794">
    <property type="entry name" value="CELL DIVISION PROTEIN DIVIVA"/>
    <property type="match status" value="1"/>
</dbReference>
<dbReference type="Pfam" id="PF05103">
    <property type="entry name" value="DivIVA"/>
    <property type="match status" value="1"/>
</dbReference>
<dbReference type="PIRSF" id="PIRSF029938">
    <property type="entry name" value="UCP029938"/>
    <property type="match status" value="1"/>
</dbReference>
<name>GPSB_STAES</name>
<keyword id="KW-0131">Cell cycle</keyword>
<keyword id="KW-0132">Cell division</keyword>
<keyword id="KW-0133">Cell shape</keyword>
<keyword id="KW-0175">Coiled coil</keyword>
<keyword id="KW-0963">Cytoplasm</keyword>
<protein>
    <recommendedName>
        <fullName evidence="1">Cell cycle protein GpsB</fullName>
    </recommendedName>
    <alternativeName>
        <fullName evidence="1">Guiding PBP1-shuttling protein</fullName>
    </alternativeName>
</protein>
<reference key="1">
    <citation type="journal article" date="2003" name="Mol. Microbiol.">
        <title>Genome-based analysis of virulence genes in a non-biofilm-forming Staphylococcus epidermidis strain (ATCC 12228).</title>
        <authorList>
            <person name="Zhang Y.-Q."/>
            <person name="Ren S.-X."/>
            <person name="Li H.-L."/>
            <person name="Wang Y.-X."/>
            <person name="Fu G."/>
            <person name="Yang J."/>
            <person name="Qin Z.-Q."/>
            <person name="Miao Y.-G."/>
            <person name="Wang W.-Y."/>
            <person name="Chen R.-S."/>
            <person name="Shen Y."/>
            <person name="Chen Z."/>
            <person name="Yuan Z.-H."/>
            <person name="Zhao G.-P."/>
            <person name="Qu D."/>
            <person name="Danchin A."/>
            <person name="Wen Y.-M."/>
        </authorList>
    </citation>
    <scope>NUCLEOTIDE SEQUENCE [LARGE SCALE GENOMIC DNA]</scope>
    <source>
        <strain>ATCC 12228 / FDA PCI 1200</strain>
    </source>
</reference>
<evidence type="ECO:0000255" key="1">
    <source>
        <dbReference type="HAMAP-Rule" id="MF_02011"/>
    </source>
</evidence>
<evidence type="ECO:0000256" key="2">
    <source>
        <dbReference type="SAM" id="MobiDB-lite"/>
    </source>
</evidence>